<sequence>MKQLRLEPVVQVRGEINIPGSKSISNRALLLATLAQGTTTLTNLLDSDDIRHMLASLKQLGVNYRLSQNNTVCELDGLGGVISSESAQELFLGNAGTAMRPLCAALTLGQGEFTLTCEPRMEERPIGDLVDALRQLGANVVYLKNDGFPPLTINATGLSGGDVEIAGDLSSQFLTALLMVAPLAKGSVNIHVKGELVSKPYIDITLALMAQFGVTVINHDYARFEIVAGQRYVSPGKVLVEGDASSASYFLAAGAIKGGEVKVTGVGRLSIQGDVKFADVLEKMGAEIEWGDDYIIARGSQLTAVDLDMNHIPDAAMTIATAALFAKGTTVIRNIYNWRIKETDRLAAMATELRKVGAEVEEGNDYIKITPPAVINTAEIDTYNDHRMAMCFSMLAFADCGITINDPDCTSKTFPDYFKQFASLQG</sequence>
<reference key="1">
    <citation type="submission" date="2007-11" db="EMBL/GenBank/DDBJ databases">
        <title>Complete sequence of chromosome of Shewanella baltica OS195.</title>
        <authorList>
            <consortium name="US DOE Joint Genome Institute"/>
            <person name="Copeland A."/>
            <person name="Lucas S."/>
            <person name="Lapidus A."/>
            <person name="Barry K."/>
            <person name="Glavina del Rio T."/>
            <person name="Dalin E."/>
            <person name="Tice H."/>
            <person name="Pitluck S."/>
            <person name="Chain P."/>
            <person name="Malfatti S."/>
            <person name="Shin M."/>
            <person name="Vergez L."/>
            <person name="Schmutz J."/>
            <person name="Larimer F."/>
            <person name="Land M."/>
            <person name="Hauser L."/>
            <person name="Kyrpides N."/>
            <person name="Kim E."/>
            <person name="Brettar I."/>
            <person name="Rodrigues J."/>
            <person name="Konstantinidis K."/>
            <person name="Klappenbach J."/>
            <person name="Hofle M."/>
            <person name="Tiedje J."/>
            <person name="Richardson P."/>
        </authorList>
    </citation>
    <scope>NUCLEOTIDE SEQUENCE [LARGE SCALE GENOMIC DNA]</scope>
    <source>
        <strain>OS195</strain>
    </source>
</reference>
<feature type="chain" id="PRO_1000077997" description="3-phosphoshikimate 1-carboxyvinyltransferase">
    <location>
        <begin position="1"/>
        <end position="426"/>
    </location>
</feature>
<feature type="active site" description="Proton acceptor" evidence="1">
    <location>
        <position position="314"/>
    </location>
</feature>
<feature type="binding site" evidence="1">
    <location>
        <position position="22"/>
    </location>
    <ligand>
        <name>3-phosphoshikimate</name>
        <dbReference type="ChEBI" id="CHEBI:145989"/>
    </ligand>
</feature>
<feature type="binding site" evidence="1">
    <location>
        <position position="22"/>
    </location>
    <ligand>
        <name>phosphoenolpyruvate</name>
        <dbReference type="ChEBI" id="CHEBI:58702"/>
    </ligand>
</feature>
<feature type="binding site" evidence="1">
    <location>
        <position position="23"/>
    </location>
    <ligand>
        <name>3-phosphoshikimate</name>
        <dbReference type="ChEBI" id="CHEBI:145989"/>
    </ligand>
</feature>
<feature type="binding site" evidence="1">
    <location>
        <position position="27"/>
    </location>
    <ligand>
        <name>3-phosphoshikimate</name>
        <dbReference type="ChEBI" id="CHEBI:145989"/>
    </ligand>
</feature>
<feature type="binding site" evidence="1">
    <location>
        <position position="96"/>
    </location>
    <ligand>
        <name>phosphoenolpyruvate</name>
        <dbReference type="ChEBI" id="CHEBI:58702"/>
    </ligand>
</feature>
<feature type="binding site" evidence="1">
    <location>
        <position position="124"/>
    </location>
    <ligand>
        <name>phosphoenolpyruvate</name>
        <dbReference type="ChEBI" id="CHEBI:58702"/>
    </ligand>
</feature>
<feature type="binding site" evidence="1">
    <location>
        <position position="170"/>
    </location>
    <ligand>
        <name>3-phosphoshikimate</name>
        <dbReference type="ChEBI" id="CHEBI:145989"/>
    </ligand>
</feature>
<feature type="binding site" evidence="1">
    <location>
        <position position="171"/>
    </location>
    <ligand>
        <name>3-phosphoshikimate</name>
        <dbReference type="ChEBI" id="CHEBI:145989"/>
    </ligand>
</feature>
<feature type="binding site" evidence="1">
    <location>
        <position position="172"/>
    </location>
    <ligand>
        <name>3-phosphoshikimate</name>
        <dbReference type="ChEBI" id="CHEBI:145989"/>
    </ligand>
</feature>
<feature type="binding site" evidence="1">
    <location>
        <position position="172"/>
    </location>
    <ligand>
        <name>phosphoenolpyruvate</name>
        <dbReference type="ChEBI" id="CHEBI:58702"/>
    </ligand>
</feature>
<feature type="binding site" evidence="1">
    <location>
        <position position="198"/>
    </location>
    <ligand>
        <name>3-phosphoshikimate</name>
        <dbReference type="ChEBI" id="CHEBI:145989"/>
    </ligand>
</feature>
<feature type="binding site" evidence="1">
    <location>
        <position position="314"/>
    </location>
    <ligand>
        <name>3-phosphoshikimate</name>
        <dbReference type="ChEBI" id="CHEBI:145989"/>
    </ligand>
</feature>
<feature type="binding site" evidence="1">
    <location>
        <position position="337"/>
    </location>
    <ligand>
        <name>3-phosphoshikimate</name>
        <dbReference type="ChEBI" id="CHEBI:145989"/>
    </ligand>
</feature>
<feature type="binding site" evidence="1">
    <location>
        <position position="341"/>
    </location>
    <ligand>
        <name>3-phosphoshikimate</name>
        <dbReference type="ChEBI" id="CHEBI:145989"/>
    </ligand>
</feature>
<feature type="binding site" evidence="1">
    <location>
        <position position="345"/>
    </location>
    <ligand>
        <name>phosphoenolpyruvate</name>
        <dbReference type="ChEBI" id="CHEBI:58702"/>
    </ligand>
</feature>
<feature type="binding site" evidence="1">
    <location>
        <position position="387"/>
    </location>
    <ligand>
        <name>phosphoenolpyruvate</name>
        <dbReference type="ChEBI" id="CHEBI:58702"/>
    </ligand>
</feature>
<feature type="binding site" evidence="1">
    <location>
        <position position="412"/>
    </location>
    <ligand>
        <name>phosphoenolpyruvate</name>
        <dbReference type="ChEBI" id="CHEBI:58702"/>
    </ligand>
</feature>
<keyword id="KW-0028">Amino-acid biosynthesis</keyword>
<keyword id="KW-0057">Aromatic amino acid biosynthesis</keyword>
<keyword id="KW-0963">Cytoplasm</keyword>
<keyword id="KW-0808">Transferase</keyword>
<name>AROA_SHEB9</name>
<dbReference type="EC" id="2.5.1.19" evidence="1"/>
<dbReference type="EMBL" id="CP000891">
    <property type="protein sequence ID" value="ABX49566.1"/>
    <property type="molecule type" value="Genomic_DNA"/>
</dbReference>
<dbReference type="RefSeq" id="WP_006086761.1">
    <property type="nucleotide sequence ID" value="NC_009997.1"/>
</dbReference>
<dbReference type="SMR" id="A9L2X7"/>
<dbReference type="GeneID" id="11772515"/>
<dbReference type="KEGG" id="sbn:Sbal195_2398"/>
<dbReference type="HOGENOM" id="CLU_024321_0_0_6"/>
<dbReference type="UniPathway" id="UPA00053">
    <property type="reaction ID" value="UER00089"/>
</dbReference>
<dbReference type="Proteomes" id="UP000000770">
    <property type="component" value="Chromosome"/>
</dbReference>
<dbReference type="GO" id="GO:0005737">
    <property type="term" value="C:cytoplasm"/>
    <property type="evidence" value="ECO:0007669"/>
    <property type="project" value="UniProtKB-SubCell"/>
</dbReference>
<dbReference type="GO" id="GO:0003866">
    <property type="term" value="F:3-phosphoshikimate 1-carboxyvinyltransferase activity"/>
    <property type="evidence" value="ECO:0007669"/>
    <property type="project" value="UniProtKB-UniRule"/>
</dbReference>
<dbReference type="GO" id="GO:0008652">
    <property type="term" value="P:amino acid biosynthetic process"/>
    <property type="evidence" value="ECO:0007669"/>
    <property type="project" value="UniProtKB-KW"/>
</dbReference>
<dbReference type="GO" id="GO:0009073">
    <property type="term" value="P:aromatic amino acid family biosynthetic process"/>
    <property type="evidence" value="ECO:0007669"/>
    <property type="project" value="UniProtKB-KW"/>
</dbReference>
<dbReference type="GO" id="GO:0009423">
    <property type="term" value="P:chorismate biosynthetic process"/>
    <property type="evidence" value="ECO:0007669"/>
    <property type="project" value="UniProtKB-UniRule"/>
</dbReference>
<dbReference type="CDD" id="cd01556">
    <property type="entry name" value="EPSP_synthase"/>
    <property type="match status" value="1"/>
</dbReference>
<dbReference type="FunFam" id="3.65.10.10:FF:000003">
    <property type="entry name" value="3-phosphoshikimate 1-carboxyvinyltransferase"/>
    <property type="match status" value="1"/>
</dbReference>
<dbReference type="FunFam" id="3.65.10.10:FF:000004">
    <property type="entry name" value="3-phosphoshikimate 1-carboxyvinyltransferase"/>
    <property type="match status" value="1"/>
</dbReference>
<dbReference type="Gene3D" id="3.65.10.10">
    <property type="entry name" value="Enolpyruvate transferase domain"/>
    <property type="match status" value="2"/>
</dbReference>
<dbReference type="HAMAP" id="MF_00210">
    <property type="entry name" value="EPSP_synth"/>
    <property type="match status" value="1"/>
</dbReference>
<dbReference type="InterPro" id="IPR001986">
    <property type="entry name" value="Enolpyruvate_Tfrase_dom"/>
</dbReference>
<dbReference type="InterPro" id="IPR036968">
    <property type="entry name" value="Enolpyruvate_Tfrase_sf"/>
</dbReference>
<dbReference type="InterPro" id="IPR006264">
    <property type="entry name" value="EPSP_synthase"/>
</dbReference>
<dbReference type="InterPro" id="IPR023193">
    <property type="entry name" value="EPSP_synthase_CS"/>
</dbReference>
<dbReference type="InterPro" id="IPR013792">
    <property type="entry name" value="RNA3'P_cycl/enolpyr_Trfase_a/b"/>
</dbReference>
<dbReference type="NCBIfam" id="TIGR01356">
    <property type="entry name" value="aroA"/>
    <property type="match status" value="1"/>
</dbReference>
<dbReference type="PANTHER" id="PTHR21090">
    <property type="entry name" value="AROM/DEHYDROQUINATE SYNTHASE"/>
    <property type="match status" value="1"/>
</dbReference>
<dbReference type="PANTHER" id="PTHR21090:SF5">
    <property type="entry name" value="PENTAFUNCTIONAL AROM POLYPEPTIDE"/>
    <property type="match status" value="1"/>
</dbReference>
<dbReference type="Pfam" id="PF00275">
    <property type="entry name" value="EPSP_synthase"/>
    <property type="match status" value="1"/>
</dbReference>
<dbReference type="PIRSF" id="PIRSF000505">
    <property type="entry name" value="EPSPS"/>
    <property type="match status" value="1"/>
</dbReference>
<dbReference type="SUPFAM" id="SSF55205">
    <property type="entry name" value="EPT/RTPC-like"/>
    <property type="match status" value="1"/>
</dbReference>
<dbReference type="PROSITE" id="PS00104">
    <property type="entry name" value="EPSP_SYNTHASE_1"/>
    <property type="match status" value="1"/>
</dbReference>
<dbReference type="PROSITE" id="PS00885">
    <property type="entry name" value="EPSP_SYNTHASE_2"/>
    <property type="match status" value="1"/>
</dbReference>
<protein>
    <recommendedName>
        <fullName evidence="1">3-phosphoshikimate 1-carboxyvinyltransferase</fullName>
        <ecNumber evidence="1">2.5.1.19</ecNumber>
    </recommendedName>
    <alternativeName>
        <fullName evidence="1">5-enolpyruvylshikimate-3-phosphate synthase</fullName>
        <shortName evidence="1">EPSP synthase</shortName>
        <shortName evidence="1">EPSPS</shortName>
    </alternativeName>
</protein>
<comment type="function">
    <text evidence="1">Catalyzes the transfer of the enolpyruvyl moiety of phosphoenolpyruvate (PEP) to the 5-hydroxyl of shikimate-3-phosphate (S3P) to produce enolpyruvyl shikimate-3-phosphate and inorganic phosphate.</text>
</comment>
<comment type="catalytic activity">
    <reaction evidence="1">
        <text>3-phosphoshikimate + phosphoenolpyruvate = 5-O-(1-carboxyvinyl)-3-phosphoshikimate + phosphate</text>
        <dbReference type="Rhea" id="RHEA:21256"/>
        <dbReference type="ChEBI" id="CHEBI:43474"/>
        <dbReference type="ChEBI" id="CHEBI:57701"/>
        <dbReference type="ChEBI" id="CHEBI:58702"/>
        <dbReference type="ChEBI" id="CHEBI:145989"/>
        <dbReference type="EC" id="2.5.1.19"/>
    </reaction>
    <physiologicalReaction direction="left-to-right" evidence="1">
        <dbReference type="Rhea" id="RHEA:21257"/>
    </physiologicalReaction>
</comment>
<comment type="pathway">
    <text evidence="1">Metabolic intermediate biosynthesis; chorismate biosynthesis; chorismate from D-erythrose 4-phosphate and phosphoenolpyruvate: step 6/7.</text>
</comment>
<comment type="subunit">
    <text evidence="1">Monomer.</text>
</comment>
<comment type="subcellular location">
    <subcellularLocation>
        <location evidence="1">Cytoplasm</location>
    </subcellularLocation>
</comment>
<comment type="similarity">
    <text evidence="1">Belongs to the EPSP synthase family.</text>
</comment>
<gene>
    <name evidence="1" type="primary">aroA</name>
    <name type="ordered locus">Sbal195_2398</name>
</gene>
<accession>A9L2X7</accession>
<organism>
    <name type="scientific">Shewanella baltica (strain OS195)</name>
    <dbReference type="NCBI Taxonomy" id="399599"/>
    <lineage>
        <taxon>Bacteria</taxon>
        <taxon>Pseudomonadati</taxon>
        <taxon>Pseudomonadota</taxon>
        <taxon>Gammaproteobacteria</taxon>
        <taxon>Alteromonadales</taxon>
        <taxon>Shewanellaceae</taxon>
        <taxon>Shewanella</taxon>
    </lineage>
</organism>
<evidence type="ECO:0000255" key="1">
    <source>
        <dbReference type="HAMAP-Rule" id="MF_00210"/>
    </source>
</evidence>
<proteinExistence type="inferred from homology"/>